<name>HCP_PECAS</name>
<feature type="chain" id="PRO_1000009154" description="Hydroxylamine reductase">
    <location>
        <begin position="1"/>
        <end position="550"/>
    </location>
</feature>
<feature type="binding site" evidence="1">
    <location>
        <position position="3"/>
    </location>
    <ligand>
        <name>[2Fe-2S] cluster</name>
        <dbReference type="ChEBI" id="CHEBI:190135"/>
    </ligand>
</feature>
<feature type="binding site" evidence="1">
    <location>
        <position position="6"/>
    </location>
    <ligand>
        <name>[2Fe-2S] cluster</name>
        <dbReference type="ChEBI" id="CHEBI:190135"/>
    </ligand>
</feature>
<feature type="binding site" evidence="1">
    <location>
        <position position="18"/>
    </location>
    <ligand>
        <name>[2Fe-2S] cluster</name>
        <dbReference type="ChEBI" id="CHEBI:190135"/>
    </ligand>
</feature>
<feature type="binding site" evidence="1">
    <location>
        <position position="25"/>
    </location>
    <ligand>
        <name>[2Fe-2S] cluster</name>
        <dbReference type="ChEBI" id="CHEBI:190135"/>
    </ligand>
</feature>
<feature type="binding site" evidence="1">
    <location>
        <position position="249"/>
    </location>
    <ligand>
        <name>hybrid [4Fe-2O-2S] cluster</name>
        <dbReference type="ChEBI" id="CHEBI:60519"/>
    </ligand>
</feature>
<feature type="binding site" evidence="1">
    <location>
        <position position="273"/>
    </location>
    <ligand>
        <name>hybrid [4Fe-2O-2S] cluster</name>
        <dbReference type="ChEBI" id="CHEBI:60519"/>
    </ligand>
</feature>
<feature type="binding site" evidence="1">
    <location>
        <position position="317"/>
    </location>
    <ligand>
        <name>hybrid [4Fe-2O-2S] cluster</name>
        <dbReference type="ChEBI" id="CHEBI:60519"/>
    </ligand>
</feature>
<feature type="binding site" description="via persulfide group" evidence="1">
    <location>
        <position position="405"/>
    </location>
    <ligand>
        <name>hybrid [4Fe-2O-2S] cluster</name>
        <dbReference type="ChEBI" id="CHEBI:60519"/>
    </ligand>
</feature>
<feature type="binding site" evidence="1">
    <location>
        <position position="433"/>
    </location>
    <ligand>
        <name>hybrid [4Fe-2O-2S] cluster</name>
        <dbReference type="ChEBI" id="CHEBI:60519"/>
    </ligand>
</feature>
<feature type="binding site" evidence="1">
    <location>
        <position position="458"/>
    </location>
    <ligand>
        <name>hybrid [4Fe-2O-2S] cluster</name>
        <dbReference type="ChEBI" id="CHEBI:60519"/>
    </ligand>
</feature>
<feature type="binding site" evidence="1">
    <location>
        <position position="492"/>
    </location>
    <ligand>
        <name>hybrid [4Fe-2O-2S] cluster</name>
        <dbReference type="ChEBI" id="CHEBI:60519"/>
    </ligand>
</feature>
<feature type="binding site" evidence="1">
    <location>
        <position position="494"/>
    </location>
    <ligand>
        <name>hybrid [4Fe-2O-2S] cluster</name>
        <dbReference type="ChEBI" id="CHEBI:60519"/>
    </ligand>
</feature>
<feature type="modified residue" description="Cysteine persulfide" evidence="1">
    <location>
        <position position="405"/>
    </location>
</feature>
<reference key="1">
    <citation type="journal article" date="2004" name="Proc. Natl. Acad. Sci. U.S.A.">
        <title>Genome sequence of the enterobacterial phytopathogen Erwinia carotovora subsp. atroseptica and characterization of virulence factors.</title>
        <authorList>
            <person name="Bell K.S."/>
            <person name="Sebaihia M."/>
            <person name="Pritchard L."/>
            <person name="Holden M.T.G."/>
            <person name="Hyman L.J."/>
            <person name="Holeva M.C."/>
            <person name="Thomson N.R."/>
            <person name="Bentley S.D."/>
            <person name="Churcher L.J.C."/>
            <person name="Mungall K."/>
            <person name="Atkin R."/>
            <person name="Bason N."/>
            <person name="Brooks K."/>
            <person name="Chillingworth T."/>
            <person name="Clark K."/>
            <person name="Doggett J."/>
            <person name="Fraser A."/>
            <person name="Hance Z."/>
            <person name="Hauser H."/>
            <person name="Jagels K."/>
            <person name="Moule S."/>
            <person name="Norbertczak H."/>
            <person name="Ormond D."/>
            <person name="Price C."/>
            <person name="Quail M.A."/>
            <person name="Sanders M."/>
            <person name="Walker D."/>
            <person name="Whitehead S."/>
            <person name="Salmond G.P.C."/>
            <person name="Birch P.R.J."/>
            <person name="Parkhill J."/>
            <person name="Toth I.K."/>
        </authorList>
    </citation>
    <scope>NUCLEOTIDE SEQUENCE [LARGE SCALE GENOMIC DNA]</scope>
    <source>
        <strain>SCRI 1043 / ATCC BAA-672</strain>
    </source>
</reference>
<comment type="function">
    <text evidence="1">Catalyzes the reduction of hydroxylamine to form NH(3) and H(2)O.</text>
</comment>
<comment type="catalytic activity">
    <reaction evidence="1">
        <text>A + NH4(+) + H2O = hydroxylamine + AH2 + H(+)</text>
        <dbReference type="Rhea" id="RHEA:22052"/>
        <dbReference type="ChEBI" id="CHEBI:13193"/>
        <dbReference type="ChEBI" id="CHEBI:15377"/>
        <dbReference type="ChEBI" id="CHEBI:15378"/>
        <dbReference type="ChEBI" id="CHEBI:15429"/>
        <dbReference type="ChEBI" id="CHEBI:17499"/>
        <dbReference type="ChEBI" id="CHEBI:28938"/>
        <dbReference type="EC" id="1.7.99.1"/>
    </reaction>
</comment>
<comment type="cofactor">
    <cofactor evidence="1">
        <name>[2Fe-2S] cluster</name>
        <dbReference type="ChEBI" id="CHEBI:190135"/>
    </cofactor>
    <text evidence="1">Binds 1 [2Fe-2S] cluster.</text>
</comment>
<comment type="cofactor">
    <cofactor evidence="1">
        <name>hybrid [4Fe-2O-2S] cluster</name>
        <dbReference type="ChEBI" id="CHEBI:60519"/>
    </cofactor>
    <text evidence="1">Binds 1 hybrid [4Fe-2O-2S] cluster.</text>
</comment>
<comment type="subcellular location">
    <subcellularLocation>
        <location evidence="1">Cytoplasm</location>
    </subcellularLocation>
</comment>
<comment type="similarity">
    <text evidence="1">Belongs to the HCP family.</text>
</comment>
<organism>
    <name type="scientific">Pectobacterium atrosepticum (strain SCRI 1043 / ATCC BAA-672)</name>
    <name type="common">Erwinia carotovora subsp. atroseptica</name>
    <dbReference type="NCBI Taxonomy" id="218491"/>
    <lineage>
        <taxon>Bacteria</taxon>
        <taxon>Pseudomonadati</taxon>
        <taxon>Pseudomonadota</taxon>
        <taxon>Gammaproteobacteria</taxon>
        <taxon>Enterobacterales</taxon>
        <taxon>Pectobacteriaceae</taxon>
        <taxon>Pectobacterium</taxon>
    </lineage>
</organism>
<keyword id="KW-0001">2Fe-2S</keyword>
<keyword id="KW-0963">Cytoplasm</keyword>
<keyword id="KW-0408">Iron</keyword>
<keyword id="KW-0411">Iron-sulfur</keyword>
<keyword id="KW-0479">Metal-binding</keyword>
<keyword id="KW-0560">Oxidoreductase</keyword>
<keyword id="KW-1185">Reference proteome</keyword>
<accession>Q6D3T2</accession>
<dbReference type="EC" id="1.7.99.1" evidence="1"/>
<dbReference type="EMBL" id="BX950851">
    <property type="protein sequence ID" value="CAG75562.1"/>
    <property type="molecule type" value="Genomic_DNA"/>
</dbReference>
<dbReference type="RefSeq" id="WP_011094205.1">
    <property type="nucleotide sequence ID" value="NC_004547.2"/>
</dbReference>
<dbReference type="SMR" id="Q6D3T2"/>
<dbReference type="STRING" id="218491.ECA2662"/>
<dbReference type="GeneID" id="57208646"/>
<dbReference type="KEGG" id="eca:ECA2662"/>
<dbReference type="PATRIC" id="fig|218491.5.peg.2695"/>
<dbReference type="eggNOG" id="COG1151">
    <property type="taxonomic scope" value="Bacteria"/>
</dbReference>
<dbReference type="HOGENOM" id="CLU_038344_2_0_6"/>
<dbReference type="OrthoDB" id="9761526at2"/>
<dbReference type="Proteomes" id="UP000007966">
    <property type="component" value="Chromosome"/>
</dbReference>
<dbReference type="GO" id="GO:0005737">
    <property type="term" value="C:cytoplasm"/>
    <property type="evidence" value="ECO:0007669"/>
    <property type="project" value="UniProtKB-SubCell"/>
</dbReference>
<dbReference type="GO" id="GO:0051537">
    <property type="term" value="F:2 iron, 2 sulfur cluster binding"/>
    <property type="evidence" value="ECO:0007669"/>
    <property type="project" value="UniProtKB-KW"/>
</dbReference>
<dbReference type="GO" id="GO:0050418">
    <property type="term" value="F:hydroxylamine reductase activity"/>
    <property type="evidence" value="ECO:0007669"/>
    <property type="project" value="UniProtKB-UniRule"/>
</dbReference>
<dbReference type="GO" id="GO:0046872">
    <property type="term" value="F:metal ion binding"/>
    <property type="evidence" value="ECO:0007669"/>
    <property type="project" value="UniProtKB-KW"/>
</dbReference>
<dbReference type="GO" id="GO:0004601">
    <property type="term" value="F:peroxidase activity"/>
    <property type="evidence" value="ECO:0007669"/>
    <property type="project" value="TreeGrafter"/>
</dbReference>
<dbReference type="GO" id="GO:0042542">
    <property type="term" value="P:response to hydrogen peroxide"/>
    <property type="evidence" value="ECO:0007669"/>
    <property type="project" value="TreeGrafter"/>
</dbReference>
<dbReference type="CDD" id="cd01914">
    <property type="entry name" value="HCP"/>
    <property type="match status" value="1"/>
</dbReference>
<dbReference type="FunFam" id="1.20.1270.20:FF:000001">
    <property type="entry name" value="Hydroxylamine reductase"/>
    <property type="match status" value="1"/>
</dbReference>
<dbReference type="FunFam" id="1.20.1270.20:FF:000002">
    <property type="entry name" value="Hydroxylamine reductase"/>
    <property type="match status" value="1"/>
</dbReference>
<dbReference type="FunFam" id="3.40.50.2030:FF:000001">
    <property type="entry name" value="Hydroxylamine reductase"/>
    <property type="match status" value="1"/>
</dbReference>
<dbReference type="FunFam" id="3.40.50.2030:FF:000002">
    <property type="entry name" value="Hydroxylamine reductase"/>
    <property type="match status" value="1"/>
</dbReference>
<dbReference type="Gene3D" id="1.20.1270.20">
    <property type="match status" value="2"/>
</dbReference>
<dbReference type="Gene3D" id="3.40.50.2030">
    <property type="match status" value="2"/>
</dbReference>
<dbReference type="HAMAP" id="MF_00069">
    <property type="entry name" value="Hydroxylam_reduct"/>
    <property type="match status" value="1"/>
</dbReference>
<dbReference type="InterPro" id="IPR004137">
    <property type="entry name" value="HCP/CODH"/>
</dbReference>
<dbReference type="InterPro" id="IPR010048">
    <property type="entry name" value="Hydroxylam_reduct"/>
</dbReference>
<dbReference type="InterPro" id="IPR016099">
    <property type="entry name" value="Prismane-like_a/b-sand"/>
</dbReference>
<dbReference type="InterPro" id="IPR011254">
    <property type="entry name" value="Prismane-like_sf"/>
</dbReference>
<dbReference type="InterPro" id="IPR016100">
    <property type="entry name" value="Prismane_a-bundle"/>
</dbReference>
<dbReference type="NCBIfam" id="TIGR01703">
    <property type="entry name" value="hybrid_clust"/>
    <property type="match status" value="1"/>
</dbReference>
<dbReference type="NCBIfam" id="NF003658">
    <property type="entry name" value="PRK05290.1"/>
    <property type="match status" value="1"/>
</dbReference>
<dbReference type="PANTHER" id="PTHR30109">
    <property type="entry name" value="HYDROXYLAMINE REDUCTASE"/>
    <property type="match status" value="1"/>
</dbReference>
<dbReference type="PANTHER" id="PTHR30109:SF0">
    <property type="entry name" value="HYDROXYLAMINE REDUCTASE"/>
    <property type="match status" value="1"/>
</dbReference>
<dbReference type="Pfam" id="PF03063">
    <property type="entry name" value="Prismane"/>
    <property type="match status" value="1"/>
</dbReference>
<dbReference type="PIRSF" id="PIRSF000076">
    <property type="entry name" value="HCP"/>
    <property type="match status" value="1"/>
</dbReference>
<dbReference type="SUPFAM" id="SSF56821">
    <property type="entry name" value="Prismane protein-like"/>
    <property type="match status" value="1"/>
</dbReference>
<sequence>MFCVQCEQTIRTPVGNGCSYAQGMCGKTAETSDLQDLLVAVLQGLSAWALKARELDIIDHDVDNFAPRAFFSTLTNVNFDSQRIIGYAQEAITLRESLAVRCRLHDATATVDHPMAALQLAGNDIPTLLQQAEDFALDSDKAIVGDDVHGLRMLNLYGLKGAAAYMEHAHVLGQYDNAIYAEYHAFMAWLGTQPTDVDTLLNNAMGIGKMNFNVMAILDHGETDAYGHPQPTSVNVRPIAGKAILISGHDLKDLRMLLEQTEGTGVNIYTHGEMLPAHGYPELKKFKHLAGNYGSGWQNQQTEFAKFPGAIVMTSNCIIDPNVGNYGDRIWTRSIVGWPGVNHLEGDDFSSVIEQAQGLAGFPYSEIEHMITVGFGRETLLSAADTVIDLVAQKKLRHVFLVGGCDGSREERSYFTDFTLSVPQDCLIMTLACGKYRFNKLDFGTLEGLPRLLDVGQCNDAYAAIILAVKLAEKLGCGVNDLPLSLVLSWFEQKAIVILLTLLSLGVKNIYTGPTAPGFLTDNLLAILNDKFGMRAITTVEQDMNTILAA</sequence>
<protein>
    <recommendedName>
        <fullName evidence="1">Hydroxylamine reductase</fullName>
        <ecNumber evidence="1">1.7.99.1</ecNumber>
    </recommendedName>
    <alternativeName>
        <fullName evidence="1">Hybrid-cluster protein</fullName>
        <shortName evidence="1">HCP</shortName>
    </alternativeName>
    <alternativeName>
        <fullName evidence="1">Prismane protein</fullName>
    </alternativeName>
</protein>
<gene>
    <name evidence="1" type="primary">hcp</name>
    <name type="ordered locus">ECA2662</name>
</gene>
<proteinExistence type="inferred from homology"/>
<evidence type="ECO:0000255" key="1">
    <source>
        <dbReference type="HAMAP-Rule" id="MF_00069"/>
    </source>
</evidence>